<organism>
    <name type="scientific">Prochlorococcus marinus subsp. pastoris (strain CCMP1986 / NIES-2087 / MED4)</name>
    <dbReference type="NCBI Taxonomy" id="59919"/>
    <lineage>
        <taxon>Bacteria</taxon>
        <taxon>Bacillati</taxon>
        <taxon>Cyanobacteriota</taxon>
        <taxon>Cyanophyceae</taxon>
        <taxon>Synechococcales</taxon>
        <taxon>Prochlorococcaceae</taxon>
        <taxon>Prochlorococcus</taxon>
    </lineage>
</organism>
<keyword id="KW-0067">ATP-binding</keyword>
<keyword id="KW-0997">Cell inner membrane</keyword>
<keyword id="KW-1003">Cell membrane</keyword>
<keyword id="KW-0472">Membrane</keyword>
<keyword id="KW-0547">Nucleotide-binding</keyword>
<keyword id="KW-0592">Phosphate transport</keyword>
<keyword id="KW-1278">Translocase</keyword>
<keyword id="KW-0813">Transport</keyword>
<comment type="function">
    <text evidence="1">Part of the ABC transporter complex PstSACB involved in phosphate import. Responsible for energy coupling to the transport system.</text>
</comment>
<comment type="catalytic activity">
    <reaction evidence="1">
        <text>phosphate(out) + ATP + H2O = ADP + 2 phosphate(in) + H(+)</text>
        <dbReference type="Rhea" id="RHEA:24440"/>
        <dbReference type="ChEBI" id="CHEBI:15377"/>
        <dbReference type="ChEBI" id="CHEBI:15378"/>
        <dbReference type="ChEBI" id="CHEBI:30616"/>
        <dbReference type="ChEBI" id="CHEBI:43474"/>
        <dbReference type="ChEBI" id="CHEBI:456216"/>
        <dbReference type="EC" id="7.3.2.1"/>
    </reaction>
</comment>
<comment type="subunit">
    <text evidence="1">The complex is composed of two ATP-binding proteins (PstB), two transmembrane proteins (PstC and PstA) and a solute-binding protein (PstS).</text>
</comment>
<comment type="subcellular location">
    <subcellularLocation>
        <location evidence="1">Cell inner membrane</location>
        <topology evidence="1">Peripheral membrane protein</topology>
    </subcellularLocation>
</comment>
<comment type="similarity">
    <text evidence="1">Belongs to the ABC transporter superfamily. Phosphate importer (TC 3.A.1.7) family.</text>
</comment>
<reference key="1">
    <citation type="journal article" date="2003" name="Nature">
        <title>Genome divergence in two Prochlorococcus ecotypes reflects oceanic niche differentiation.</title>
        <authorList>
            <person name="Rocap G."/>
            <person name="Larimer F.W."/>
            <person name="Lamerdin J.E."/>
            <person name="Malfatti S."/>
            <person name="Chain P."/>
            <person name="Ahlgren N.A."/>
            <person name="Arellano A."/>
            <person name="Coleman M."/>
            <person name="Hauser L."/>
            <person name="Hess W.R."/>
            <person name="Johnson Z.I."/>
            <person name="Land M.L."/>
            <person name="Lindell D."/>
            <person name="Post A.F."/>
            <person name="Regala W."/>
            <person name="Shah M."/>
            <person name="Shaw S.L."/>
            <person name="Steglich C."/>
            <person name="Sullivan M.B."/>
            <person name="Ting C.S."/>
            <person name="Tolonen A."/>
            <person name="Webb E.A."/>
            <person name="Zinser E.R."/>
            <person name="Chisholm S.W."/>
        </authorList>
    </citation>
    <scope>NUCLEOTIDE SEQUENCE [LARGE SCALE GENOMIC DNA]</scope>
    <source>
        <strain>CCMP1986 / NIES-2087 / MED4</strain>
    </source>
</reference>
<feature type="chain" id="PRO_0000092860" description="Phosphate import ATP-binding protein PstB">
    <location>
        <begin position="1"/>
        <end position="269"/>
    </location>
</feature>
<feature type="domain" description="ABC transporter" evidence="1">
    <location>
        <begin position="14"/>
        <end position="253"/>
    </location>
</feature>
<feature type="binding site" evidence="1">
    <location>
        <begin position="46"/>
        <end position="53"/>
    </location>
    <ligand>
        <name>ATP</name>
        <dbReference type="ChEBI" id="CHEBI:30616"/>
    </ligand>
</feature>
<evidence type="ECO:0000255" key="1">
    <source>
        <dbReference type="HAMAP-Rule" id="MF_01702"/>
    </source>
</evidence>
<name>PSTB_PROMP</name>
<sequence>MIKNTKKSQKNKILTLEDVSISYGTFEAVRNVFCNFKSGDITSLIGPSGCGKSTVLRALNRMNDLIPNCSLRGTVLFDGTNIYDKRVDPVEVRRRIGMVFQQPNPFPKSIYENIAFGARINGFVGDMDELVESSLRKAAVWSECKDKLNDSGYSLSGGQQQRLCIARTIAIEPEIILMDEPCSALDPISTLKIEETMHELKKNYTIIIVTHNMQQALRVSDMTAFFNAVEYEEGDGGKVGYLAEFDSTKKIFSSPKEKTTQEYISGKFG</sequence>
<protein>
    <recommendedName>
        <fullName evidence="1">Phosphate import ATP-binding protein PstB</fullName>
        <ecNumber evidence="1">7.3.2.1</ecNumber>
    </recommendedName>
    <alternativeName>
        <fullName evidence="1">ABC phosphate transporter</fullName>
    </alternativeName>
    <alternativeName>
        <fullName evidence="1">Phosphate-transporting ATPase</fullName>
    </alternativeName>
</protein>
<accession>Q7V1X3</accession>
<gene>
    <name evidence="1" type="primary">pstB</name>
    <name type="ordered locus">PMM0725</name>
</gene>
<proteinExistence type="inferred from homology"/>
<dbReference type="EC" id="7.3.2.1" evidence="1"/>
<dbReference type="EMBL" id="BX548174">
    <property type="protein sequence ID" value="CAE19184.1"/>
    <property type="molecule type" value="Genomic_DNA"/>
</dbReference>
<dbReference type="RefSeq" id="WP_011132359.1">
    <property type="nucleotide sequence ID" value="NC_005072.1"/>
</dbReference>
<dbReference type="SMR" id="Q7V1X3"/>
<dbReference type="STRING" id="59919.PMM0725"/>
<dbReference type="KEGG" id="pmm:PMM0725"/>
<dbReference type="eggNOG" id="COG1117">
    <property type="taxonomic scope" value="Bacteria"/>
</dbReference>
<dbReference type="HOGENOM" id="CLU_000604_1_22_3"/>
<dbReference type="OrthoDB" id="9802185at2"/>
<dbReference type="Proteomes" id="UP000001026">
    <property type="component" value="Chromosome"/>
</dbReference>
<dbReference type="GO" id="GO:0005886">
    <property type="term" value="C:plasma membrane"/>
    <property type="evidence" value="ECO:0007669"/>
    <property type="project" value="UniProtKB-SubCell"/>
</dbReference>
<dbReference type="GO" id="GO:0005524">
    <property type="term" value="F:ATP binding"/>
    <property type="evidence" value="ECO:0007669"/>
    <property type="project" value="UniProtKB-KW"/>
</dbReference>
<dbReference type="GO" id="GO:0016887">
    <property type="term" value="F:ATP hydrolysis activity"/>
    <property type="evidence" value="ECO:0007669"/>
    <property type="project" value="InterPro"/>
</dbReference>
<dbReference type="GO" id="GO:0015415">
    <property type="term" value="F:ATPase-coupled phosphate ion transmembrane transporter activity"/>
    <property type="evidence" value="ECO:0007669"/>
    <property type="project" value="UniProtKB-EC"/>
</dbReference>
<dbReference type="GO" id="GO:0035435">
    <property type="term" value="P:phosphate ion transmembrane transport"/>
    <property type="evidence" value="ECO:0007669"/>
    <property type="project" value="InterPro"/>
</dbReference>
<dbReference type="CDD" id="cd03260">
    <property type="entry name" value="ABC_PstB_phosphate_transporter"/>
    <property type="match status" value="1"/>
</dbReference>
<dbReference type="Gene3D" id="3.40.50.300">
    <property type="entry name" value="P-loop containing nucleotide triphosphate hydrolases"/>
    <property type="match status" value="1"/>
</dbReference>
<dbReference type="InterPro" id="IPR003593">
    <property type="entry name" value="AAA+_ATPase"/>
</dbReference>
<dbReference type="InterPro" id="IPR003439">
    <property type="entry name" value="ABC_transporter-like_ATP-bd"/>
</dbReference>
<dbReference type="InterPro" id="IPR017871">
    <property type="entry name" value="ABC_transporter-like_CS"/>
</dbReference>
<dbReference type="InterPro" id="IPR027417">
    <property type="entry name" value="P-loop_NTPase"/>
</dbReference>
<dbReference type="InterPro" id="IPR005670">
    <property type="entry name" value="PstB-like"/>
</dbReference>
<dbReference type="NCBIfam" id="TIGR00972">
    <property type="entry name" value="3a0107s01c2"/>
    <property type="match status" value="1"/>
</dbReference>
<dbReference type="PANTHER" id="PTHR43423">
    <property type="entry name" value="ABC TRANSPORTER I FAMILY MEMBER 17"/>
    <property type="match status" value="1"/>
</dbReference>
<dbReference type="PANTHER" id="PTHR43423:SF1">
    <property type="entry name" value="ABC TRANSPORTER I FAMILY MEMBER 17"/>
    <property type="match status" value="1"/>
</dbReference>
<dbReference type="Pfam" id="PF00005">
    <property type="entry name" value="ABC_tran"/>
    <property type="match status" value="1"/>
</dbReference>
<dbReference type="SMART" id="SM00382">
    <property type="entry name" value="AAA"/>
    <property type="match status" value="1"/>
</dbReference>
<dbReference type="SUPFAM" id="SSF52540">
    <property type="entry name" value="P-loop containing nucleoside triphosphate hydrolases"/>
    <property type="match status" value="1"/>
</dbReference>
<dbReference type="PROSITE" id="PS00211">
    <property type="entry name" value="ABC_TRANSPORTER_1"/>
    <property type="match status" value="1"/>
</dbReference>
<dbReference type="PROSITE" id="PS50893">
    <property type="entry name" value="ABC_TRANSPORTER_2"/>
    <property type="match status" value="1"/>
</dbReference>
<dbReference type="PROSITE" id="PS51238">
    <property type="entry name" value="PSTB"/>
    <property type="match status" value="1"/>
</dbReference>